<accession>B7NLM4</accession>
<proteinExistence type="inferred from homology"/>
<reference key="1">
    <citation type="journal article" date="2009" name="PLoS Genet.">
        <title>Organised genome dynamics in the Escherichia coli species results in highly diverse adaptive paths.</title>
        <authorList>
            <person name="Touchon M."/>
            <person name="Hoede C."/>
            <person name="Tenaillon O."/>
            <person name="Barbe V."/>
            <person name="Baeriswyl S."/>
            <person name="Bidet P."/>
            <person name="Bingen E."/>
            <person name="Bonacorsi S."/>
            <person name="Bouchier C."/>
            <person name="Bouvet O."/>
            <person name="Calteau A."/>
            <person name="Chiapello H."/>
            <person name="Clermont O."/>
            <person name="Cruveiller S."/>
            <person name="Danchin A."/>
            <person name="Diard M."/>
            <person name="Dossat C."/>
            <person name="Karoui M.E."/>
            <person name="Frapy E."/>
            <person name="Garry L."/>
            <person name="Ghigo J.M."/>
            <person name="Gilles A.M."/>
            <person name="Johnson J."/>
            <person name="Le Bouguenec C."/>
            <person name="Lescat M."/>
            <person name="Mangenot S."/>
            <person name="Martinez-Jehanne V."/>
            <person name="Matic I."/>
            <person name="Nassif X."/>
            <person name="Oztas S."/>
            <person name="Petit M.A."/>
            <person name="Pichon C."/>
            <person name="Rouy Z."/>
            <person name="Ruf C.S."/>
            <person name="Schneider D."/>
            <person name="Tourret J."/>
            <person name="Vacherie B."/>
            <person name="Vallenet D."/>
            <person name="Medigue C."/>
            <person name="Rocha E.P.C."/>
            <person name="Denamur E."/>
        </authorList>
    </citation>
    <scope>NUCLEOTIDE SEQUENCE [LARGE SCALE GENOMIC DNA]</scope>
    <source>
        <strain>IAI39 / ExPEC</strain>
    </source>
</reference>
<name>RL6_ECO7I</name>
<sequence>MSRVAKAPVVVPAGVDVKINGQVITIKGKNGELTRTLNDAVEVKHADNTLTFGPRDGYADGWAQAGTARALLNSMVIGVTEGFTKKLQLVGVGYRAAVKGNVINLSLGFSHPVDHQLPAGITAECPTQTEIVLKGADKQVIGQVAADLRAYRRPEPYKGKGVRYADEVVRTKEAKKK</sequence>
<gene>
    <name evidence="1" type="primary">rplF</name>
    <name type="ordered locus">ECIAI39_3799</name>
</gene>
<keyword id="KW-0007">Acetylation</keyword>
<keyword id="KW-0687">Ribonucleoprotein</keyword>
<keyword id="KW-0689">Ribosomal protein</keyword>
<keyword id="KW-0694">RNA-binding</keyword>
<keyword id="KW-0699">rRNA-binding</keyword>
<protein>
    <recommendedName>
        <fullName evidence="1">Large ribosomal subunit protein uL6</fullName>
    </recommendedName>
    <alternativeName>
        <fullName evidence="2">50S ribosomal protein L6</fullName>
    </alternativeName>
</protein>
<comment type="function">
    <text evidence="1">This protein binds to the 23S rRNA, and is important in its secondary structure. It is located near the subunit interface in the base of the L7/L12 stalk, and near the tRNA binding site of the peptidyltransferase center.</text>
</comment>
<comment type="subunit">
    <text evidence="1">Part of the 50S ribosomal subunit.</text>
</comment>
<comment type="similarity">
    <text evidence="1">Belongs to the universal ribosomal protein uL6 family.</text>
</comment>
<organism>
    <name type="scientific">Escherichia coli O7:K1 (strain IAI39 / ExPEC)</name>
    <dbReference type="NCBI Taxonomy" id="585057"/>
    <lineage>
        <taxon>Bacteria</taxon>
        <taxon>Pseudomonadati</taxon>
        <taxon>Pseudomonadota</taxon>
        <taxon>Gammaproteobacteria</taxon>
        <taxon>Enterobacterales</taxon>
        <taxon>Enterobacteriaceae</taxon>
        <taxon>Escherichia</taxon>
    </lineage>
</organism>
<evidence type="ECO:0000255" key="1">
    <source>
        <dbReference type="HAMAP-Rule" id="MF_01365"/>
    </source>
</evidence>
<evidence type="ECO:0000305" key="2"/>
<dbReference type="EMBL" id="CU928164">
    <property type="protein sequence ID" value="CAR19913.1"/>
    <property type="molecule type" value="Genomic_DNA"/>
</dbReference>
<dbReference type="RefSeq" id="WP_000091945.1">
    <property type="nucleotide sequence ID" value="NC_011750.1"/>
</dbReference>
<dbReference type="RefSeq" id="YP_002409696.1">
    <property type="nucleotide sequence ID" value="NC_011750.1"/>
</dbReference>
<dbReference type="SMR" id="B7NLM4"/>
<dbReference type="STRING" id="585057.ECIAI39_3799"/>
<dbReference type="GeneID" id="86948169"/>
<dbReference type="KEGG" id="ect:ECIAI39_3799"/>
<dbReference type="PATRIC" id="fig|585057.6.peg.3936"/>
<dbReference type="HOGENOM" id="CLU_065464_1_2_6"/>
<dbReference type="Proteomes" id="UP000000749">
    <property type="component" value="Chromosome"/>
</dbReference>
<dbReference type="GO" id="GO:0022625">
    <property type="term" value="C:cytosolic large ribosomal subunit"/>
    <property type="evidence" value="ECO:0007669"/>
    <property type="project" value="TreeGrafter"/>
</dbReference>
<dbReference type="GO" id="GO:0019843">
    <property type="term" value="F:rRNA binding"/>
    <property type="evidence" value="ECO:0007669"/>
    <property type="project" value="UniProtKB-UniRule"/>
</dbReference>
<dbReference type="GO" id="GO:0003735">
    <property type="term" value="F:structural constituent of ribosome"/>
    <property type="evidence" value="ECO:0007669"/>
    <property type="project" value="InterPro"/>
</dbReference>
<dbReference type="GO" id="GO:0002181">
    <property type="term" value="P:cytoplasmic translation"/>
    <property type="evidence" value="ECO:0007669"/>
    <property type="project" value="TreeGrafter"/>
</dbReference>
<dbReference type="FunFam" id="3.90.930.12:FF:000001">
    <property type="entry name" value="50S ribosomal protein L6"/>
    <property type="match status" value="1"/>
</dbReference>
<dbReference type="FunFam" id="3.90.930.12:FF:000002">
    <property type="entry name" value="50S ribosomal protein L6"/>
    <property type="match status" value="1"/>
</dbReference>
<dbReference type="Gene3D" id="3.90.930.12">
    <property type="entry name" value="Ribosomal protein L6, alpha-beta domain"/>
    <property type="match status" value="2"/>
</dbReference>
<dbReference type="HAMAP" id="MF_01365_B">
    <property type="entry name" value="Ribosomal_uL6_B"/>
    <property type="match status" value="1"/>
</dbReference>
<dbReference type="InterPro" id="IPR000702">
    <property type="entry name" value="Ribosomal_uL6-like"/>
</dbReference>
<dbReference type="InterPro" id="IPR036789">
    <property type="entry name" value="Ribosomal_uL6-like_a/b-dom_sf"/>
</dbReference>
<dbReference type="InterPro" id="IPR020040">
    <property type="entry name" value="Ribosomal_uL6_a/b-dom"/>
</dbReference>
<dbReference type="InterPro" id="IPR019906">
    <property type="entry name" value="Ribosomal_uL6_bac-type"/>
</dbReference>
<dbReference type="InterPro" id="IPR002358">
    <property type="entry name" value="Ribosomal_uL6_CS"/>
</dbReference>
<dbReference type="NCBIfam" id="TIGR03654">
    <property type="entry name" value="L6_bact"/>
    <property type="match status" value="1"/>
</dbReference>
<dbReference type="PANTHER" id="PTHR11655">
    <property type="entry name" value="60S/50S RIBOSOMAL PROTEIN L6/L9"/>
    <property type="match status" value="1"/>
</dbReference>
<dbReference type="PANTHER" id="PTHR11655:SF14">
    <property type="entry name" value="LARGE RIBOSOMAL SUBUNIT PROTEIN UL6M"/>
    <property type="match status" value="1"/>
</dbReference>
<dbReference type="Pfam" id="PF00347">
    <property type="entry name" value="Ribosomal_L6"/>
    <property type="match status" value="2"/>
</dbReference>
<dbReference type="PIRSF" id="PIRSF002162">
    <property type="entry name" value="Ribosomal_L6"/>
    <property type="match status" value="1"/>
</dbReference>
<dbReference type="PRINTS" id="PR00059">
    <property type="entry name" value="RIBOSOMALL6"/>
</dbReference>
<dbReference type="SUPFAM" id="SSF56053">
    <property type="entry name" value="Ribosomal protein L6"/>
    <property type="match status" value="2"/>
</dbReference>
<dbReference type="PROSITE" id="PS00525">
    <property type="entry name" value="RIBOSOMAL_L6_1"/>
    <property type="match status" value="1"/>
</dbReference>
<feature type="chain" id="PRO_1000143983" description="Large ribosomal subunit protein uL6">
    <location>
        <begin position="1"/>
        <end position="177"/>
    </location>
</feature>
<feature type="modified residue" description="N6-acetyllysine" evidence="1">
    <location>
        <position position="44"/>
    </location>
</feature>